<accession>O27661</accession>
<evidence type="ECO:0000255" key="1">
    <source>
        <dbReference type="HAMAP-Rule" id="MF_00952"/>
    </source>
</evidence>
<evidence type="ECO:0000255" key="2">
    <source>
        <dbReference type="PROSITE-ProRule" id="PRU01383"/>
    </source>
</evidence>
<evidence type="ECO:0000256" key="3">
    <source>
        <dbReference type="SAM" id="MobiDB-lite"/>
    </source>
</evidence>
<dbReference type="EC" id="5.6.2.1" evidence="1"/>
<dbReference type="EMBL" id="AE000666">
    <property type="protein sequence ID" value="AAB86097.1"/>
    <property type="molecule type" value="Genomic_DNA"/>
</dbReference>
<dbReference type="PIR" id="A69084">
    <property type="entry name" value="A69084"/>
</dbReference>
<dbReference type="SMR" id="O27661"/>
<dbReference type="FunCoup" id="O27661">
    <property type="interactions" value="138"/>
</dbReference>
<dbReference type="STRING" id="187420.MTH_1624"/>
<dbReference type="PaxDb" id="187420-MTH_1624"/>
<dbReference type="EnsemblBacteria" id="AAB86097">
    <property type="protein sequence ID" value="AAB86097"/>
    <property type="gene ID" value="MTH_1624"/>
</dbReference>
<dbReference type="KEGG" id="mth:MTH_1624"/>
<dbReference type="PATRIC" id="fig|187420.15.peg.1588"/>
<dbReference type="HOGENOM" id="CLU_002929_5_2_2"/>
<dbReference type="InParanoid" id="O27661"/>
<dbReference type="Proteomes" id="UP000005223">
    <property type="component" value="Chromosome"/>
</dbReference>
<dbReference type="GO" id="GO:0005694">
    <property type="term" value="C:chromosome"/>
    <property type="evidence" value="ECO:0007669"/>
    <property type="project" value="InterPro"/>
</dbReference>
<dbReference type="GO" id="GO:0003677">
    <property type="term" value="F:DNA binding"/>
    <property type="evidence" value="ECO:0007669"/>
    <property type="project" value="UniProtKB-KW"/>
</dbReference>
<dbReference type="GO" id="GO:0003917">
    <property type="term" value="F:DNA topoisomerase type I (single strand cut, ATP-independent) activity"/>
    <property type="evidence" value="ECO:0007669"/>
    <property type="project" value="UniProtKB-UniRule"/>
</dbReference>
<dbReference type="GO" id="GO:0008270">
    <property type="term" value="F:zinc ion binding"/>
    <property type="evidence" value="ECO:0007669"/>
    <property type="project" value="UniProtKB-KW"/>
</dbReference>
<dbReference type="GO" id="GO:0006310">
    <property type="term" value="P:DNA recombination"/>
    <property type="evidence" value="ECO:0007669"/>
    <property type="project" value="TreeGrafter"/>
</dbReference>
<dbReference type="GO" id="GO:0006281">
    <property type="term" value="P:DNA repair"/>
    <property type="evidence" value="ECO:0007669"/>
    <property type="project" value="TreeGrafter"/>
</dbReference>
<dbReference type="GO" id="GO:0006265">
    <property type="term" value="P:DNA topological change"/>
    <property type="evidence" value="ECO:0007669"/>
    <property type="project" value="UniProtKB-UniRule"/>
</dbReference>
<dbReference type="CDD" id="cd00186">
    <property type="entry name" value="TOP1Ac"/>
    <property type="match status" value="1"/>
</dbReference>
<dbReference type="Gene3D" id="3.40.50.140">
    <property type="match status" value="1"/>
</dbReference>
<dbReference type="Gene3D" id="3.30.65.10">
    <property type="entry name" value="Bacterial Topoisomerase I, domain 1"/>
    <property type="match status" value="2"/>
</dbReference>
<dbReference type="Gene3D" id="1.10.460.10">
    <property type="entry name" value="Topoisomerase I, domain 2"/>
    <property type="match status" value="1"/>
</dbReference>
<dbReference type="Gene3D" id="2.70.20.10">
    <property type="entry name" value="Topoisomerase I, domain 3"/>
    <property type="match status" value="1"/>
</dbReference>
<dbReference type="Gene3D" id="1.10.290.10">
    <property type="entry name" value="Topoisomerase I, domain 4"/>
    <property type="match status" value="1"/>
</dbReference>
<dbReference type="HAMAP" id="MF_00952">
    <property type="entry name" value="Topoisom_1_prok"/>
    <property type="match status" value="1"/>
</dbReference>
<dbReference type="InterPro" id="IPR000380">
    <property type="entry name" value="Topo_IA"/>
</dbReference>
<dbReference type="InterPro" id="IPR003601">
    <property type="entry name" value="Topo_IA_2"/>
</dbReference>
<dbReference type="InterPro" id="IPR023406">
    <property type="entry name" value="Topo_IA_AS"/>
</dbReference>
<dbReference type="InterPro" id="IPR013497">
    <property type="entry name" value="Topo_IA_cen"/>
</dbReference>
<dbReference type="InterPro" id="IPR013824">
    <property type="entry name" value="Topo_IA_cen_sub1"/>
</dbReference>
<dbReference type="InterPro" id="IPR013825">
    <property type="entry name" value="Topo_IA_cen_sub2"/>
</dbReference>
<dbReference type="InterPro" id="IPR013826">
    <property type="entry name" value="Topo_IA_cen_sub3"/>
</dbReference>
<dbReference type="InterPro" id="IPR023405">
    <property type="entry name" value="Topo_IA_core_domain"/>
</dbReference>
<dbReference type="InterPro" id="IPR003602">
    <property type="entry name" value="Topo_IA_DNA-bd_dom"/>
</dbReference>
<dbReference type="InterPro" id="IPR013498">
    <property type="entry name" value="Topo_IA_Znf"/>
</dbReference>
<dbReference type="InterPro" id="IPR005739">
    <property type="entry name" value="TopoI_arch"/>
</dbReference>
<dbReference type="InterPro" id="IPR028612">
    <property type="entry name" value="Topoisom_1_IA"/>
</dbReference>
<dbReference type="InterPro" id="IPR006171">
    <property type="entry name" value="TOPRIM_dom"/>
</dbReference>
<dbReference type="NCBIfam" id="TIGR01057">
    <property type="entry name" value="topA_arch"/>
    <property type="match status" value="1"/>
</dbReference>
<dbReference type="PANTHER" id="PTHR11390:SF26">
    <property type="entry name" value="DNA TOPOISOMERASE 1"/>
    <property type="match status" value="1"/>
</dbReference>
<dbReference type="PANTHER" id="PTHR11390">
    <property type="entry name" value="PROKARYOTIC DNA TOPOISOMERASE"/>
    <property type="match status" value="1"/>
</dbReference>
<dbReference type="Pfam" id="PF01131">
    <property type="entry name" value="Topoisom_bac"/>
    <property type="match status" value="1"/>
</dbReference>
<dbReference type="Pfam" id="PF01751">
    <property type="entry name" value="Toprim"/>
    <property type="match status" value="1"/>
</dbReference>
<dbReference type="Pfam" id="PF01396">
    <property type="entry name" value="Zn_ribbon_Top1"/>
    <property type="match status" value="2"/>
</dbReference>
<dbReference type="PRINTS" id="PR00417">
    <property type="entry name" value="PRTPISMRASEI"/>
</dbReference>
<dbReference type="SMART" id="SM00437">
    <property type="entry name" value="TOP1Ac"/>
    <property type="match status" value="1"/>
</dbReference>
<dbReference type="SMART" id="SM00436">
    <property type="entry name" value="TOP1Bc"/>
    <property type="match status" value="1"/>
</dbReference>
<dbReference type="SMART" id="SM00493">
    <property type="entry name" value="TOPRIM"/>
    <property type="match status" value="1"/>
</dbReference>
<dbReference type="SUPFAM" id="SSF56712">
    <property type="entry name" value="Prokaryotic type I DNA topoisomerase"/>
    <property type="match status" value="1"/>
</dbReference>
<dbReference type="SUPFAM" id="SSF57783">
    <property type="entry name" value="Zinc beta-ribbon"/>
    <property type="match status" value="1"/>
</dbReference>
<dbReference type="PROSITE" id="PS00396">
    <property type="entry name" value="TOPO_IA_1"/>
    <property type="match status" value="1"/>
</dbReference>
<dbReference type="PROSITE" id="PS52039">
    <property type="entry name" value="TOPO_IA_2"/>
    <property type="match status" value="1"/>
</dbReference>
<dbReference type="PROSITE" id="PS50880">
    <property type="entry name" value="TOPRIM"/>
    <property type="match status" value="1"/>
</dbReference>
<reference key="1">
    <citation type="journal article" date="1997" name="J. Bacteriol.">
        <title>Complete genome sequence of Methanobacterium thermoautotrophicum deltaH: functional analysis and comparative genomics.</title>
        <authorList>
            <person name="Smith D.R."/>
            <person name="Doucette-Stamm L.A."/>
            <person name="Deloughery C."/>
            <person name="Lee H.-M."/>
            <person name="Dubois J."/>
            <person name="Aldredge T."/>
            <person name="Bashirzadeh R."/>
            <person name="Blakely D."/>
            <person name="Cook R."/>
            <person name="Gilbert K."/>
            <person name="Harrison D."/>
            <person name="Hoang L."/>
            <person name="Keagle P."/>
            <person name="Lumm W."/>
            <person name="Pothier B."/>
            <person name="Qiu D."/>
            <person name="Spadafora R."/>
            <person name="Vicare R."/>
            <person name="Wang Y."/>
            <person name="Wierzbowski J."/>
            <person name="Gibson R."/>
            <person name="Jiwani N."/>
            <person name="Caruso A."/>
            <person name="Bush D."/>
            <person name="Safer H."/>
            <person name="Patwell D."/>
            <person name="Prabhakar S."/>
            <person name="McDougall S."/>
            <person name="Shimer G."/>
            <person name="Goyal A."/>
            <person name="Pietrovski S."/>
            <person name="Church G.M."/>
            <person name="Daniels C.J."/>
            <person name="Mao J.-I."/>
            <person name="Rice P."/>
            <person name="Noelling J."/>
            <person name="Reeve J.N."/>
        </authorList>
    </citation>
    <scope>NUCLEOTIDE SEQUENCE [LARGE SCALE GENOMIC DNA]</scope>
    <source>
        <strain>ATCC 29096 / DSM 1053 / JCM 10044 / NBRC 100330 / Delta H</strain>
    </source>
</reference>
<feature type="chain" id="PRO_0000145179" description="DNA topoisomerase 1">
    <location>
        <begin position="1"/>
        <end position="718"/>
    </location>
</feature>
<feature type="domain" description="Toprim" evidence="1">
    <location>
        <begin position="9"/>
        <end position="151"/>
    </location>
</feature>
<feature type="domain" description="Topo IA-type catalytic" evidence="2">
    <location>
        <begin position="162"/>
        <end position="571"/>
    </location>
</feature>
<feature type="zinc finger region" description="C4-type 1">
    <location>
        <begin position="598"/>
        <end position="626"/>
    </location>
</feature>
<feature type="zinc finger region" description="C4-type 2">
    <location>
        <begin position="680"/>
        <end position="706"/>
    </location>
</feature>
<feature type="region of interest" description="Interaction with DNA" evidence="1">
    <location>
        <begin position="202"/>
        <end position="207"/>
    </location>
</feature>
<feature type="region of interest" description="Disordered" evidence="3">
    <location>
        <begin position="361"/>
        <end position="380"/>
    </location>
</feature>
<feature type="compositionally biased region" description="Basic and acidic residues" evidence="3">
    <location>
        <begin position="361"/>
        <end position="371"/>
    </location>
</feature>
<feature type="active site" description="O-(5'-phospho-DNA)-tyrosine intermediate" evidence="2">
    <location>
        <position position="320"/>
    </location>
</feature>
<feature type="binding site" evidence="1">
    <location>
        <position position="15"/>
    </location>
    <ligand>
        <name>Mg(2+)</name>
        <dbReference type="ChEBI" id="CHEBI:18420"/>
        <note>catalytic</note>
    </ligand>
</feature>
<feature type="binding site" evidence="1">
    <location>
        <position position="113"/>
    </location>
    <ligand>
        <name>Mg(2+)</name>
        <dbReference type="ChEBI" id="CHEBI:18420"/>
        <note>catalytic</note>
    </ligand>
</feature>
<feature type="site" description="Interaction with DNA" evidence="1">
    <location>
        <position position="59"/>
    </location>
</feature>
<feature type="site" description="Interaction with DNA" evidence="1">
    <location>
        <position position="172"/>
    </location>
</feature>
<feature type="site" description="Interaction with DNA" evidence="1">
    <location>
        <position position="176"/>
    </location>
</feature>
<feature type="site" description="Interaction with DNA" evidence="1">
    <location>
        <position position="322"/>
    </location>
</feature>
<feature type="site" description="Interaction with DNA" evidence="1">
    <location>
        <position position="505"/>
    </location>
</feature>
<keyword id="KW-0238">DNA-binding</keyword>
<keyword id="KW-0413">Isomerase</keyword>
<keyword id="KW-0460">Magnesium</keyword>
<keyword id="KW-0479">Metal-binding</keyword>
<keyword id="KW-1185">Reference proteome</keyword>
<keyword id="KW-0677">Repeat</keyword>
<keyword id="KW-0799">Topoisomerase</keyword>
<keyword id="KW-0862">Zinc</keyword>
<keyword id="KW-0863">Zinc-finger</keyword>
<sequence>MRSLSGKMHEVIICEKPKSSEKIAGALFPDAMKKKHGKVSYWEHVEGDKRVTIVSAVGHLYSLRPRQSNEEHFFDLEWAPIHEIDKKKGYVKDYLNVIRKFAAGADRYIHACDYDIEGTLIGFNALKYGCGEEALRKTSRMKFSTLTREEIQRAYKNPIEVDYGQVDSGAARHILDFIFGVNISRSLMKSVKAATNRFIKLSAGRVQTPTLAILVEREKEIRDFKPVPYWIIRAELGEGIIAESKRGKIFKRELVDSILEKCQGSDAEVKDVRVRDTIRKPPVPFDLGTLQSEAYRVFGFSPKKTQTIAQNLYTEGYTSYPRTSSQKLPESIGYEKILKNLAKNPRFGVHIERLRGPLKPHEGKKEDDAHPAIHPTGLLPSELSKDEKKVYDLIVHRFISVFGEDAILQTMKVELEIGEEEFSFSRKRVSKAGWMESYPYTKMEDEEFPEISGGDSLAVRSVSADERETKPPARYNEASLIRELERRGLGTKSTRADIIAKLYDRKYIEGKKIRVSPLGENIIDTLTRYCEKIISEELTRQFERELEDIMRGKISKDRVIDEAITEVRSILSDIEENLRDIGKELYRAYQDSRVVGECPACGGKLVIKYSPRNRSTFVGCSSYPDCRTVYSLPRGASVLKSLCEKCGLPMISYGRPRQRACLDPKCGKKKSEVEEVVGKCPECGSDLIKRSGRYGEFVGCKGFPKCRFTCSVDEVPEG</sequence>
<proteinExistence type="inferred from homology"/>
<comment type="function">
    <text evidence="1">Releases the supercoiling and torsional tension of DNA, which is introduced during the DNA replication and transcription, by transiently cleaving and rejoining one strand of the DNA duplex. Introduces a single-strand break via transesterification at a target site in duplex DNA. The scissile phosphodiester is attacked by the catalytic tyrosine of the enzyme, resulting in the formation of a DNA-(5'-phosphotyrosyl)-enzyme intermediate and the expulsion of a 3'-OH DNA strand. The free DNA strand then undergoes passage around the unbroken strand, thus removing DNA supercoils. Finally, in the religation step, the DNA 3'-OH attacks the covalent intermediate to expel the active-site tyrosine and restore the DNA phosphodiester backbone.</text>
</comment>
<comment type="catalytic activity">
    <reaction evidence="1">
        <text>ATP-independent breakage of single-stranded DNA, followed by passage and rejoining.</text>
        <dbReference type="EC" id="5.6.2.1"/>
    </reaction>
</comment>
<comment type="cofactor">
    <cofactor evidence="1">
        <name>Mg(2+)</name>
        <dbReference type="ChEBI" id="CHEBI:18420"/>
    </cofactor>
</comment>
<comment type="subunit">
    <text evidence="1">Monomer.</text>
</comment>
<comment type="similarity">
    <text evidence="1">Belongs to the type IA topoisomerase family.</text>
</comment>
<organism>
    <name type="scientific">Methanothermobacter thermautotrophicus (strain ATCC 29096 / DSM 1053 / JCM 10044 / NBRC 100330 / Delta H)</name>
    <name type="common">Methanobacterium thermoautotrophicum</name>
    <dbReference type="NCBI Taxonomy" id="187420"/>
    <lineage>
        <taxon>Archaea</taxon>
        <taxon>Methanobacteriati</taxon>
        <taxon>Methanobacteriota</taxon>
        <taxon>Methanomada group</taxon>
        <taxon>Methanobacteria</taxon>
        <taxon>Methanobacteriales</taxon>
        <taxon>Methanobacteriaceae</taxon>
        <taxon>Methanothermobacter</taxon>
    </lineage>
</organism>
<protein>
    <recommendedName>
        <fullName evidence="1">DNA topoisomerase 1</fullName>
        <ecNumber evidence="1">5.6.2.1</ecNumber>
    </recommendedName>
    <alternativeName>
        <fullName evidence="1">DNA topoisomerase I</fullName>
    </alternativeName>
    <alternativeName>
        <fullName>Omega-protein</fullName>
    </alternativeName>
    <alternativeName>
        <fullName>Relaxing enzyme</fullName>
    </alternativeName>
    <alternativeName>
        <fullName>Swivelase</fullName>
    </alternativeName>
    <alternativeName>
        <fullName>Untwisting enzyme</fullName>
    </alternativeName>
</protein>
<name>TOP1_METTH</name>
<gene>
    <name evidence="1" type="primary">topA</name>
    <name type="ordered locus">MTH_1624</name>
</gene>